<evidence type="ECO:0000250" key="1">
    <source>
        <dbReference type="UniProtKB" id="P29022"/>
    </source>
</evidence>
<evidence type="ECO:0000255" key="2"/>
<evidence type="ECO:0000255" key="3">
    <source>
        <dbReference type="PROSITE-ProRule" id="PRU00261"/>
    </source>
</evidence>
<evidence type="ECO:0000269" key="4">
    <source>
    </source>
</evidence>
<evidence type="ECO:0000269" key="5">
    <source>
    </source>
</evidence>
<evidence type="ECO:0000269" key="6">
    <source>
    </source>
</evidence>
<evidence type="ECO:0000305" key="7"/>
<gene>
    <name type="primary">Cht3</name>
    <name type="synonym">CH6</name>
    <name type="ordered locus">Os06g0726100</name>
    <name type="ordered locus">LOC_Os06g51050</name>
    <name type="ORF">P0017G10.2</name>
    <name type="ORF">P0548E04.22</name>
</gene>
<keyword id="KW-0119">Carbohydrate metabolism</keyword>
<keyword id="KW-0146">Chitin degradation</keyword>
<keyword id="KW-0147">Chitin-binding</keyword>
<keyword id="KW-1015">Disulfide bond</keyword>
<keyword id="KW-0326">Glycosidase</keyword>
<keyword id="KW-0378">Hydrolase</keyword>
<keyword id="KW-0611">Plant defense</keyword>
<keyword id="KW-0624">Polysaccharide degradation</keyword>
<keyword id="KW-1185">Reference proteome</keyword>
<keyword id="KW-0732">Signal</keyword>
<comment type="function">
    <text evidence="4 6">Hydrolyzes chitin and plays a role in defense against fungal pathogens containing chitin. Inhibits the growth of T.reesei fungus on plate assay.</text>
</comment>
<comment type="catalytic activity">
    <reaction>
        <text>Random endo-hydrolysis of N-acetyl-beta-D-glucosaminide (1-&gt;4)-beta-linkages in chitin and chitodextrins.</text>
        <dbReference type="EC" id="3.2.1.14"/>
    </reaction>
</comment>
<comment type="tissue specificity">
    <text evidence="5">Expressed at low levels in roots, leaves, sheaths and meristems.</text>
</comment>
<comment type="similarity">
    <text evidence="7">Belongs to the glycosyl hydrolase 19 family. Chitinase class I subfamily.</text>
</comment>
<accession>P24626</accession>
<accession>Q42994</accession>
<proteinExistence type="evidence at transcript level"/>
<reference key="1">
    <citation type="journal article" date="1991" name="Plant Mol. Biol.">
        <title>Nucleotide sequence of a rice genomic clone that encodes a class I endochitinase.</title>
        <authorList>
            <person name="Huang J.K."/>
            <person name="Wen L."/>
            <person name="Swegle M."/>
            <person name="Tran H.C."/>
            <person name="Thin T.H."/>
            <person name="Naylor H.M."/>
            <person name="Muthukrishnan S."/>
            <person name="Reeck G.R."/>
        </authorList>
    </citation>
    <scope>NUCLEOTIDE SEQUENCE [GENOMIC DNA]</scope>
    <source>
        <tissue>Seedling</tissue>
    </source>
</reference>
<reference key="2">
    <citation type="journal article" date="1993" name="Mol. Gen. Genet.">
        <title>Sequence variation, differential expression and chromosomal location of rice chitinase genes.</title>
        <authorList>
            <person name="Nishizawa Y."/>
            <person name="Kishimoto N."/>
            <person name="Saito A."/>
            <person name="Hibi T."/>
        </authorList>
    </citation>
    <scope>NUCLEOTIDE SEQUENCE [GENOMIC DNA]</scope>
</reference>
<reference key="3">
    <citation type="journal article" date="2005" name="Nature">
        <title>The map-based sequence of the rice genome.</title>
        <authorList>
            <consortium name="International rice genome sequencing project (IRGSP)"/>
        </authorList>
    </citation>
    <scope>NUCLEOTIDE SEQUENCE [LARGE SCALE GENOMIC DNA]</scope>
    <source>
        <strain>cv. Nipponbare</strain>
    </source>
</reference>
<reference key="4">
    <citation type="journal article" date="2013" name="Rice">
        <title>Improvement of the Oryza sativa Nipponbare reference genome using next generation sequence and optical map data.</title>
        <authorList>
            <person name="Kawahara Y."/>
            <person name="de la Bastide M."/>
            <person name="Hamilton J.P."/>
            <person name="Kanamori H."/>
            <person name="McCombie W.R."/>
            <person name="Ouyang S."/>
            <person name="Schwartz D.C."/>
            <person name="Tanaka T."/>
            <person name="Wu J."/>
            <person name="Zhou S."/>
            <person name="Childs K.L."/>
            <person name="Davidson R.M."/>
            <person name="Lin H."/>
            <person name="Quesada-Ocampo L."/>
            <person name="Vaillancourt B."/>
            <person name="Sakai H."/>
            <person name="Lee S.S."/>
            <person name="Kim J."/>
            <person name="Numa H."/>
            <person name="Itoh T."/>
            <person name="Buell C.R."/>
            <person name="Matsumoto T."/>
        </authorList>
    </citation>
    <scope>GENOME REANNOTATION</scope>
    <source>
        <strain>cv. Nipponbare</strain>
    </source>
</reference>
<reference key="5">
    <citation type="journal article" date="2003" name="Science">
        <title>Collection, mapping, and annotation of over 28,000 cDNA clones from japonica rice.</title>
        <authorList>
            <consortium name="The rice full-length cDNA consortium"/>
        </authorList>
    </citation>
    <scope>NUCLEOTIDE SEQUENCE [LARGE SCALE MRNA]</scope>
    <source>
        <strain>cv. Nipponbare</strain>
    </source>
</reference>
<reference key="6">
    <citation type="journal article" date="2003" name="Biosci. Biotechnol. Biochem.">
        <title>Structure, heterologous expression, and properties of rice (Oryza sativa L.) family 19 chitinases.</title>
        <authorList>
            <person name="Truong N.-H."/>
            <person name="Park S.-M."/>
            <person name="Nishizawa Y."/>
            <person name="Watanabe T."/>
            <person name="Sasaki T."/>
            <person name="Itoh Y."/>
        </authorList>
    </citation>
    <scope>FUNCTION</scope>
</reference>
<reference key="7">
    <citation type="journal article" date="2006" name="Genome">
        <title>Distribution, structure, organ-specific expression, and phylogenic analysis of the pathogenesis-related protein-3 chitinase gene family in rice (Oryza sativa L.).</title>
        <authorList>
            <person name="Nakazaki T."/>
            <person name="Tsukiyama T."/>
            <person name="Okumoto Y."/>
            <person name="Kageyama D."/>
            <person name="Naito K."/>
            <person name="Inouye K."/>
            <person name="Tanisaka T."/>
        </authorList>
    </citation>
    <scope>GENE FAMILY</scope>
    <scope>NOMENCLATURE</scope>
    <scope>TISSUE SPECIFICITY</scope>
</reference>
<reference key="8">
    <citation type="journal article" date="2008" name="J. Biochem.">
        <title>Role of the loop structure of the catalytic domain in rice class I chitinase.</title>
        <authorList>
            <person name="Mizuno R."/>
            <person name="Fukamizo T."/>
            <person name="Sugiyama S."/>
            <person name="Nishizawa Y."/>
            <person name="Kezuka Y."/>
            <person name="Nonaka T."/>
            <person name="Suzuki K."/>
            <person name="Watanabe T."/>
        </authorList>
    </citation>
    <scope>FUNCTION</scope>
</reference>
<protein>
    <recommendedName>
        <fullName>Chitinase 3</fullName>
        <ecNumber>3.2.1.14</ecNumber>
    </recommendedName>
    <alternativeName>
        <fullName>Basic endochitinase 1</fullName>
    </alternativeName>
    <alternativeName>
        <fullName>Class I chitinase c</fullName>
        <shortName>OsChia1c</shortName>
    </alternativeName>
    <alternativeName>
        <fullName>Pathogenesis related (PR)-3 chitinase 3</fullName>
    </alternativeName>
</protein>
<sequence length="320" mass="33681">MRALALAVVAMAVVAVRGEQCGSQAGGALCPNCLCCSQYGWCGSTSDYCGAGCQSQCSGGCGGGPTPPSSGGGSGVASIISPSLFDQMLLHRNDQACAAKGFYTYDAFVAAANAYPDFATTGDADTCKREVAAFLAQTSHETTGGWPTAPDGPYSWGYCFKEENNGNAPTYCEPKPEWPCAAGKKYYGRGPIQITYNYNYGPAGQAIGSDLLNNPDLVASDATVSFKTAFWFWMTPQSPKPSCHAVITGQWTPSADDQAAGRVPGYGEITNIINGGVECGHGADDKVADRIGFYKRYCDMLGVSYGDNLDCYNQRPYPPS</sequence>
<dbReference type="EC" id="3.2.1.14"/>
<dbReference type="EMBL" id="X54367">
    <property type="protein sequence ID" value="CAA38249.1"/>
    <property type="molecule type" value="Genomic_DNA"/>
</dbReference>
<dbReference type="EMBL" id="D16223">
    <property type="protein sequence ID" value="BAA03751.1"/>
    <property type="molecule type" value="Genomic_DNA"/>
</dbReference>
<dbReference type="EMBL" id="AP003685">
    <property type="protein sequence ID" value="BAD61708.1"/>
    <property type="molecule type" value="Genomic_DNA"/>
</dbReference>
<dbReference type="EMBL" id="AP004685">
    <property type="protein sequence ID" value="BAD61800.1"/>
    <property type="molecule type" value="Genomic_DNA"/>
</dbReference>
<dbReference type="EMBL" id="AP014962">
    <property type="protein sequence ID" value="BAS99595.1"/>
    <property type="molecule type" value="Genomic_DNA"/>
</dbReference>
<dbReference type="EMBL" id="AK061280">
    <property type="status" value="NOT_ANNOTATED_CDS"/>
    <property type="molecule type" value="mRNA"/>
</dbReference>
<dbReference type="PIR" id="S14948">
    <property type="entry name" value="S14948"/>
</dbReference>
<dbReference type="RefSeq" id="XP_015643569.1">
    <property type="nucleotide sequence ID" value="XM_015788083.1"/>
</dbReference>
<dbReference type="SMR" id="P24626"/>
<dbReference type="FunCoup" id="P24626">
    <property type="interactions" value="264"/>
</dbReference>
<dbReference type="STRING" id="39947.P24626"/>
<dbReference type="CAZy" id="CBM18">
    <property type="family name" value="Carbohydrate-Binding Module Family 18"/>
</dbReference>
<dbReference type="CAZy" id="GH19">
    <property type="family name" value="Glycoside Hydrolase Family 19"/>
</dbReference>
<dbReference type="PaxDb" id="39947-P24626"/>
<dbReference type="EnsemblPlants" id="Os06t0726100-01">
    <property type="protein sequence ID" value="Os06t0726100-01"/>
    <property type="gene ID" value="Os06g0726100"/>
</dbReference>
<dbReference type="Gramene" id="Os06t0726100-01">
    <property type="protein sequence ID" value="Os06t0726100-01"/>
    <property type="gene ID" value="Os06g0726100"/>
</dbReference>
<dbReference type="eggNOG" id="KOG4742">
    <property type="taxonomic scope" value="Eukaryota"/>
</dbReference>
<dbReference type="HOGENOM" id="CLU_045506_1_0_1"/>
<dbReference type="InParanoid" id="P24626"/>
<dbReference type="OMA" id="WEYCKNT"/>
<dbReference type="OrthoDB" id="5985073at2759"/>
<dbReference type="BRENDA" id="3.2.1.14">
    <property type="organism ID" value="4460"/>
</dbReference>
<dbReference type="Proteomes" id="UP000000763">
    <property type="component" value="Chromosome 6"/>
</dbReference>
<dbReference type="Proteomes" id="UP000059680">
    <property type="component" value="Chromosome 6"/>
</dbReference>
<dbReference type="ExpressionAtlas" id="P24626">
    <property type="expression patterns" value="baseline and differential"/>
</dbReference>
<dbReference type="GO" id="GO:0016231">
    <property type="term" value="F:beta-N-acetylglucosaminidase activity"/>
    <property type="evidence" value="ECO:0000250"/>
    <property type="project" value="Gramene"/>
</dbReference>
<dbReference type="GO" id="GO:0008061">
    <property type="term" value="F:chitin binding"/>
    <property type="evidence" value="ECO:0000250"/>
    <property type="project" value="Gramene"/>
</dbReference>
<dbReference type="GO" id="GO:0004568">
    <property type="term" value="F:chitinase activity"/>
    <property type="evidence" value="ECO:0000314"/>
    <property type="project" value="UniProtKB"/>
</dbReference>
<dbReference type="GO" id="GO:0008843">
    <property type="term" value="F:endochitinase activity"/>
    <property type="evidence" value="ECO:0000250"/>
    <property type="project" value="Gramene"/>
</dbReference>
<dbReference type="GO" id="GO:0006040">
    <property type="term" value="P:amino sugar metabolic process"/>
    <property type="evidence" value="ECO:0000250"/>
    <property type="project" value="Gramene"/>
</dbReference>
<dbReference type="GO" id="GO:0016998">
    <property type="term" value="P:cell wall macromolecule catabolic process"/>
    <property type="evidence" value="ECO:0007669"/>
    <property type="project" value="InterPro"/>
</dbReference>
<dbReference type="GO" id="GO:0006032">
    <property type="term" value="P:chitin catabolic process"/>
    <property type="evidence" value="ECO:0007669"/>
    <property type="project" value="UniProtKB-KW"/>
</dbReference>
<dbReference type="GO" id="GO:0050832">
    <property type="term" value="P:defense response to fungus"/>
    <property type="evidence" value="ECO:0000314"/>
    <property type="project" value="UniProtKB"/>
</dbReference>
<dbReference type="GO" id="GO:0000272">
    <property type="term" value="P:polysaccharide catabolic process"/>
    <property type="evidence" value="ECO:0007669"/>
    <property type="project" value="UniProtKB-KW"/>
</dbReference>
<dbReference type="CDD" id="cd00325">
    <property type="entry name" value="chitinase_GH19"/>
    <property type="match status" value="1"/>
</dbReference>
<dbReference type="CDD" id="cd06921">
    <property type="entry name" value="ChtBD1_GH19_hevein"/>
    <property type="match status" value="1"/>
</dbReference>
<dbReference type="FunFam" id="3.30.60.10:FF:000001">
    <property type="entry name" value="Basic endochitinase"/>
    <property type="match status" value="1"/>
</dbReference>
<dbReference type="FunFam" id="3.30.20.10:FF:000001">
    <property type="entry name" value="Endochitinase (Chitinase)"/>
    <property type="match status" value="1"/>
</dbReference>
<dbReference type="Gene3D" id="1.10.530.10">
    <property type="match status" value="1"/>
</dbReference>
<dbReference type="Gene3D" id="3.30.20.10">
    <property type="entry name" value="Endochitinase, domain 2"/>
    <property type="match status" value="1"/>
</dbReference>
<dbReference type="Gene3D" id="3.30.60.10">
    <property type="entry name" value="Endochitinase-like"/>
    <property type="match status" value="1"/>
</dbReference>
<dbReference type="InterPro" id="IPR001002">
    <property type="entry name" value="Chitin-bd_1"/>
</dbReference>
<dbReference type="InterPro" id="IPR018371">
    <property type="entry name" value="Chitin-binding_1_CS"/>
</dbReference>
<dbReference type="InterPro" id="IPR036861">
    <property type="entry name" value="Endochitinase-like_sf"/>
</dbReference>
<dbReference type="InterPro" id="IPR016283">
    <property type="entry name" value="Glyco_hydro_19"/>
</dbReference>
<dbReference type="InterPro" id="IPR000726">
    <property type="entry name" value="Glyco_hydro_19_cat"/>
</dbReference>
<dbReference type="InterPro" id="IPR023346">
    <property type="entry name" value="Lysozyme-like_dom_sf"/>
</dbReference>
<dbReference type="PANTHER" id="PTHR22595:SF79">
    <property type="entry name" value="CHITINASE 12"/>
    <property type="match status" value="1"/>
</dbReference>
<dbReference type="PANTHER" id="PTHR22595">
    <property type="entry name" value="CHITINASE-RELATED"/>
    <property type="match status" value="1"/>
</dbReference>
<dbReference type="Pfam" id="PF00187">
    <property type="entry name" value="Chitin_bind_1"/>
    <property type="match status" value="1"/>
</dbReference>
<dbReference type="Pfam" id="PF00182">
    <property type="entry name" value="Glyco_hydro_19"/>
    <property type="match status" value="1"/>
</dbReference>
<dbReference type="PIRSF" id="PIRSF001060">
    <property type="entry name" value="Endochitinase"/>
    <property type="match status" value="1"/>
</dbReference>
<dbReference type="PRINTS" id="PR00451">
    <property type="entry name" value="CHITINBINDNG"/>
</dbReference>
<dbReference type="SMART" id="SM00270">
    <property type="entry name" value="ChtBD1"/>
    <property type="match status" value="1"/>
</dbReference>
<dbReference type="SUPFAM" id="SSF53955">
    <property type="entry name" value="Lysozyme-like"/>
    <property type="match status" value="1"/>
</dbReference>
<dbReference type="SUPFAM" id="SSF57016">
    <property type="entry name" value="Plant lectins/antimicrobial peptides"/>
    <property type="match status" value="1"/>
</dbReference>
<dbReference type="PROSITE" id="PS00026">
    <property type="entry name" value="CHIT_BIND_I_1"/>
    <property type="match status" value="1"/>
</dbReference>
<dbReference type="PROSITE" id="PS50941">
    <property type="entry name" value="CHIT_BIND_I_2"/>
    <property type="match status" value="1"/>
</dbReference>
<dbReference type="PROSITE" id="PS00773">
    <property type="entry name" value="CHITINASE_19_1"/>
    <property type="match status" value="1"/>
</dbReference>
<dbReference type="PROSITE" id="PS00774">
    <property type="entry name" value="CHITINASE_19_2"/>
    <property type="match status" value="1"/>
</dbReference>
<feature type="signal peptide" evidence="2">
    <location>
        <begin position="1"/>
        <end position="18"/>
    </location>
</feature>
<feature type="chain" id="PRO_0000005305" description="Chitinase 3">
    <location>
        <begin position="19"/>
        <end position="320"/>
    </location>
</feature>
<feature type="domain" description="Chitin-binding type-1" evidence="3">
    <location>
        <begin position="19"/>
        <end position="59"/>
    </location>
</feature>
<feature type="active site" description="Proton donor" evidence="1">
    <location>
        <position position="141"/>
    </location>
</feature>
<feature type="disulfide bond" evidence="3">
    <location>
        <begin position="21"/>
        <end position="36"/>
    </location>
</feature>
<feature type="disulfide bond" evidence="3">
    <location>
        <begin position="30"/>
        <end position="42"/>
    </location>
</feature>
<feature type="disulfide bond" evidence="3">
    <location>
        <begin position="33"/>
        <end position="61"/>
    </location>
</feature>
<feature type="disulfide bond" evidence="3">
    <location>
        <begin position="35"/>
        <end position="49"/>
    </location>
</feature>
<feature type="disulfide bond" evidence="3">
    <location>
        <begin position="53"/>
        <end position="57"/>
    </location>
</feature>
<feature type="disulfide bond" evidence="3">
    <location>
        <begin position="97"/>
        <end position="159"/>
    </location>
</feature>
<feature type="disulfide bond" evidence="3">
    <location>
        <begin position="172"/>
        <end position="180"/>
    </location>
</feature>
<feature type="disulfide bond" evidence="3">
    <location>
        <begin position="279"/>
        <end position="311"/>
    </location>
</feature>
<feature type="sequence conflict" description="In Ref. 1; CAA38249." evidence="7" ref="1">
    <original>A</original>
    <variation>R</variation>
    <location>
        <position position="98"/>
    </location>
</feature>
<feature type="sequence conflict" description="In Ref. 1; CAA38249." evidence="7" ref="1">
    <original>G</original>
    <variation>R</variation>
    <location>
        <position position="122"/>
    </location>
</feature>
<feature type="sequence conflict" description="In Ref. 1; CAA38249." evidence="7" ref="1">
    <original>G</original>
    <variation>A</variation>
    <location>
        <position position="183"/>
    </location>
</feature>
<feature type="sequence conflict" description="In Ref. 1; CAA38249." evidence="7" ref="1">
    <original>PAGQA</original>
    <variation>RGAG</variation>
    <location>
        <begin position="202"/>
        <end position="206"/>
    </location>
</feature>
<feature type="sequence conflict" description="In Ref. 1; CAA38249." evidence="7" ref="1">
    <location>
        <position position="223"/>
    </location>
</feature>
<organism>
    <name type="scientific">Oryza sativa subsp. japonica</name>
    <name type="common">Rice</name>
    <dbReference type="NCBI Taxonomy" id="39947"/>
    <lineage>
        <taxon>Eukaryota</taxon>
        <taxon>Viridiplantae</taxon>
        <taxon>Streptophyta</taxon>
        <taxon>Embryophyta</taxon>
        <taxon>Tracheophyta</taxon>
        <taxon>Spermatophyta</taxon>
        <taxon>Magnoliopsida</taxon>
        <taxon>Liliopsida</taxon>
        <taxon>Poales</taxon>
        <taxon>Poaceae</taxon>
        <taxon>BOP clade</taxon>
        <taxon>Oryzoideae</taxon>
        <taxon>Oryzeae</taxon>
        <taxon>Oryzinae</taxon>
        <taxon>Oryza</taxon>
        <taxon>Oryza sativa</taxon>
    </lineage>
</organism>
<name>CHI3_ORYSJ</name>